<comment type="subunit">
    <text evidence="1">Homodimer.</text>
</comment>
<comment type="similarity">
    <text evidence="2">Belongs to the YciI family.</text>
</comment>
<comment type="sequence caution" evidence="2">
    <conflict type="erroneous initiation">
        <sequence resource="EMBL-CDS" id="AAN80183"/>
    </conflict>
</comment>
<protein>
    <recommendedName>
        <fullName>Protein YciI</fullName>
    </recommendedName>
</protein>
<reference key="1">
    <citation type="journal article" date="2002" name="Proc. Natl. Acad. Sci. U.S.A.">
        <title>Extensive mosaic structure revealed by the complete genome sequence of uropathogenic Escherichia coli.</title>
        <authorList>
            <person name="Welch R.A."/>
            <person name="Burland V."/>
            <person name="Plunkett G. III"/>
            <person name="Redford P."/>
            <person name="Roesch P."/>
            <person name="Rasko D."/>
            <person name="Buckles E.L."/>
            <person name="Liou S.-R."/>
            <person name="Boutin A."/>
            <person name="Hackett J."/>
            <person name="Stroud D."/>
            <person name="Mayhew G.F."/>
            <person name="Rose D.J."/>
            <person name="Zhou S."/>
            <person name="Schwartz D.C."/>
            <person name="Perna N.T."/>
            <person name="Mobley H.L.T."/>
            <person name="Donnenberg M.S."/>
            <person name="Blattner F.R."/>
        </authorList>
    </citation>
    <scope>NUCLEOTIDE SEQUENCE [LARGE SCALE GENOMIC DNA]</scope>
    <source>
        <strain>CFT073 / ATCC 700928 / UPEC</strain>
    </source>
</reference>
<name>YCII_ECOL6</name>
<feature type="chain" id="PRO_0000168877" description="Protein YciI">
    <location>
        <begin position="1"/>
        <end position="98"/>
    </location>
</feature>
<dbReference type="EMBL" id="AE014075">
    <property type="protein sequence ID" value="AAN80183.1"/>
    <property type="status" value="ALT_INIT"/>
    <property type="molecule type" value="Genomic_DNA"/>
</dbReference>
<dbReference type="RefSeq" id="WP_000967595.1">
    <property type="nucleotide sequence ID" value="NZ_CP051263.1"/>
</dbReference>
<dbReference type="SMR" id="P0AB56"/>
<dbReference type="STRING" id="199310.c1716"/>
<dbReference type="KEGG" id="ecc:c1716"/>
<dbReference type="eggNOG" id="COG2350">
    <property type="taxonomic scope" value="Bacteria"/>
</dbReference>
<dbReference type="HOGENOM" id="CLU_110355_3_0_6"/>
<dbReference type="Proteomes" id="UP000001410">
    <property type="component" value="Chromosome"/>
</dbReference>
<dbReference type="FunFam" id="3.30.70.1060:FF:000001">
    <property type="entry name" value="YciI family protein"/>
    <property type="match status" value="1"/>
</dbReference>
<dbReference type="Gene3D" id="3.30.70.1060">
    <property type="entry name" value="Dimeric alpha+beta barrel"/>
    <property type="match status" value="1"/>
</dbReference>
<dbReference type="InterPro" id="IPR011008">
    <property type="entry name" value="Dimeric_a/b-barrel"/>
</dbReference>
<dbReference type="InterPro" id="IPR051807">
    <property type="entry name" value="Sec-metab_biosynth-assoc"/>
</dbReference>
<dbReference type="InterPro" id="IPR005545">
    <property type="entry name" value="YCII"/>
</dbReference>
<dbReference type="NCBIfam" id="NF008473">
    <property type="entry name" value="PRK11370.1"/>
    <property type="match status" value="1"/>
</dbReference>
<dbReference type="PANTHER" id="PTHR33606">
    <property type="entry name" value="PROTEIN YCII"/>
    <property type="match status" value="1"/>
</dbReference>
<dbReference type="PANTHER" id="PTHR33606:SF3">
    <property type="entry name" value="PROTEIN YCII"/>
    <property type="match status" value="1"/>
</dbReference>
<dbReference type="Pfam" id="PF03795">
    <property type="entry name" value="YCII"/>
    <property type="match status" value="1"/>
</dbReference>
<dbReference type="SUPFAM" id="SSF54909">
    <property type="entry name" value="Dimeric alpha+beta barrel"/>
    <property type="match status" value="1"/>
</dbReference>
<gene>
    <name type="primary">yciI</name>
    <name type="ordered locus">c1716</name>
</gene>
<organism>
    <name type="scientific">Escherichia coli O6:H1 (strain CFT073 / ATCC 700928 / UPEC)</name>
    <dbReference type="NCBI Taxonomy" id="199310"/>
    <lineage>
        <taxon>Bacteria</taxon>
        <taxon>Pseudomonadati</taxon>
        <taxon>Pseudomonadota</taxon>
        <taxon>Gammaproteobacteria</taxon>
        <taxon>Enterobacterales</taxon>
        <taxon>Enterobacteriaceae</taxon>
        <taxon>Escherichia</taxon>
    </lineage>
</organism>
<proteinExistence type="inferred from homology"/>
<accession>P0AB56</accession>
<accession>P31070</accession>
<accession>P76029</accession>
<sequence length="98" mass="10602">MLYVIYAQDKADSLEKRLSVRPAHLARLQLLHDEGRLLTAGPMPAVDSNDPGAAGFTGSTVIAEFESLEAAQAWADADPYVAAGVYEHVSVKPFKKVF</sequence>
<keyword id="KW-1185">Reference proteome</keyword>
<evidence type="ECO:0000250" key="1"/>
<evidence type="ECO:0000305" key="2"/>